<proteinExistence type="inferred from homology"/>
<organism>
    <name type="scientific">Acaryochloris marina (strain MBIC 11017)</name>
    <dbReference type="NCBI Taxonomy" id="329726"/>
    <lineage>
        <taxon>Bacteria</taxon>
        <taxon>Bacillati</taxon>
        <taxon>Cyanobacteriota</taxon>
        <taxon>Cyanophyceae</taxon>
        <taxon>Acaryochloridales</taxon>
        <taxon>Acaryochloridaceae</taxon>
        <taxon>Acaryochloris</taxon>
    </lineage>
</organism>
<dbReference type="EC" id="6.3.2.6" evidence="1"/>
<dbReference type="EMBL" id="CP000828">
    <property type="protein sequence ID" value="ABW25638.1"/>
    <property type="molecule type" value="Genomic_DNA"/>
</dbReference>
<dbReference type="RefSeq" id="WP_012161237.1">
    <property type="nucleotide sequence ID" value="NC_009925.1"/>
</dbReference>
<dbReference type="SMR" id="B0CD47"/>
<dbReference type="STRING" id="329726.AM1_0588"/>
<dbReference type="KEGG" id="amr:AM1_0588"/>
<dbReference type="eggNOG" id="COG0152">
    <property type="taxonomic scope" value="Bacteria"/>
</dbReference>
<dbReference type="HOGENOM" id="CLU_061495_2_0_3"/>
<dbReference type="OrthoDB" id="9801549at2"/>
<dbReference type="UniPathway" id="UPA00074">
    <property type="reaction ID" value="UER00131"/>
</dbReference>
<dbReference type="Proteomes" id="UP000000268">
    <property type="component" value="Chromosome"/>
</dbReference>
<dbReference type="GO" id="GO:0005524">
    <property type="term" value="F:ATP binding"/>
    <property type="evidence" value="ECO:0007669"/>
    <property type="project" value="UniProtKB-KW"/>
</dbReference>
<dbReference type="GO" id="GO:0004639">
    <property type="term" value="F:phosphoribosylaminoimidazolesuccinocarboxamide synthase activity"/>
    <property type="evidence" value="ECO:0007669"/>
    <property type="project" value="UniProtKB-UniRule"/>
</dbReference>
<dbReference type="GO" id="GO:0006189">
    <property type="term" value="P:'de novo' IMP biosynthetic process"/>
    <property type="evidence" value="ECO:0007669"/>
    <property type="project" value="UniProtKB-UniRule"/>
</dbReference>
<dbReference type="GO" id="GO:0009236">
    <property type="term" value="P:cobalamin biosynthetic process"/>
    <property type="evidence" value="ECO:0007669"/>
    <property type="project" value="InterPro"/>
</dbReference>
<dbReference type="CDD" id="cd01415">
    <property type="entry name" value="SAICAR_synt_PurC"/>
    <property type="match status" value="1"/>
</dbReference>
<dbReference type="FunFam" id="3.30.470.20:FF:000006">
    <property type="entry name" value="Phosphoribosylaminoimidazole-succinocarboxamide synthase"/>
    <property type="match status" value="1"/>
</dbReference>
<dbReference type="Gene3D" id="3.30.470.20">
    <property type="entry name" value="ATP-grasp fold, B domain"/>
    <property type="match status" value="1"/>
</dbReference>
<dbReference type="Gene3D" id="3.30.200.20">
    <property type="entry name" value="Phosphorylase Kinase, domain 1"/>
    <property type="match status" value="1"/>
</dbReference>
<dbReference type="HAMAP" id="MF_00137">
    <property type="entry name" value="SAICAR_synth"/>
    <property type="match status" value="1"/>
</dbReference>
<dbReference type="InterPro" id="IPR028923">
    <property type="entry name" value="SAICAR_synt/ADE2_N"/>
</dbReference>
<dbReference type="InterPro" id="IPR033934">
    <property type="entry name" value="SAICAR_synt_PurC"/>
</dbReference>
<dbReference type="InterPro" id="IPR001636">
    <property type="entry name" value="SAICAR_synth"/>
</dbReference>
<dbReference type="InterPro" id="IPR050089">
    <property type="entry name" value="SAICAR_synthetase"/>
</dbReference>
<dbReference type="InterPro" id="IPR018236">
    <property type="entry name" value="SAICAR_synthetase_CS"/>
</dbReference>
<dbReference type="NCBIfam" id="TIGR00081">
    <property type="entry name" value="purC"/>
    <property type="match status" value="1"/>
</dbReference>
<dbReference type="PANTHER" id="PTHR43599">
    <property type="entry name" value="MULTIFUNCTIONAL PROTEIN ADE2"/>
    <property type="match status" value="1"/>
</dbReference>
<dbReference type="PANTHER" id="PTHR43599:SF3">
    <property type="entry name" value="SI:DKEY-6E2.2"/>
    <property type="match status" value="1"/>
</dbReference>
<dbReference type="Pfam" id="PF01259">
    <property type="entry name" value="SAICAR_synt"/>
    <property type="match status" value="1"/>
</dbReference>
<dbReference type="SUPFAM" id="SSF56104">
    <property type="entry name" value="SAICAR synthase-like"/>
    <property type="match status" value="1"/>
</dbReference>
<dbReference type="PROSITE" id="PS01057">
    <property type="entry name" value="SAICAR_SYNTHETASE_1"/>
    <property type="match status" value="1"/>
</dbReference>
<dbReference type="PROSITE" id="PS01058">
    <property type="entry name" value="SAICAR_SYNTHETASE_2"/>
    <property type="match status" value="1"/>
</dbReference>
<name>PUR7_ACAM1</name>
<protein>
    <recommendedName>
        <fullName evidence="1">Phosphoribosylaminoimidazole-succinocarboxamide synthase</fullName>
        <ecNumber evidence="1">6.3.2.6</ecNumber>
    </recommendedName>
    <alternativeName>
        <fullName evidence="1">SAICAR synthetase</fullName>
    </alternativeName>
</protein>
<reference key="1">
    <citation type="journal article" date="2008" name="Proc. Natl. Acad. Sci. U.S.A.">
        <title>Niche adaptation and genome expansion in the chlorophyll d-producing cyanobacterium Acaryochloris marina.</title>
        <authorList>
            <person name="Swingley W.D."/>
            <person name="Chen M."/>
            <person name="Cheung P.C."/>
            <person name="Conrad A.L."/>
            <person name="Dejesa L.C."/>
            <person name="Hao J."/>
            <person name="Honchak B.M."/>
            <person name="Karbach L.E."/>
            <person name="Kurdoglu A."/>
            <person name="Lahiri S."/>
            <person name="Mastrian S.D."/>
            <person name="Miyashita H."/>
            <person name="Page L."/>
            <person name="Ramakrishna P."/>
            <person name="Satoh S."/>
            <person name="Sattley W.M."/>
            <person name="Shimada Y."/>
            <person name="Taylor H.L."/>
            <person name="Tomo T."/>
            <person name="Tsuchiya T."/>
            <person name="Wang Z.T."/>
            <person name="Raymond J."/>
            <person name="Mimuro M."/>
            <person name="Blankenship R.E."/>
            <person name="Touchman J.W."/>
        </authorList>
    </citation>
    <scope>NUCLEOTIDE SEQUENCE [LARGE SCALE GENOMIC DNA]</scope>
    <source>
        <strain>MBIC 11017</strain>
    </source>
</reference>
<sequence>MSTGEFLYEGKAKIIYRTDDPDILLAQYKDDATAFNAQKRGTITNKGRINCAIATHLFKVLEAAGIATHFIDQPNPDQMRMRAVQIVPLEVVVRNIAAGSLCQQTGLALGVPLSQPLVDFYYKDDALGDPLLTRDRIFLLELTTPEQLEQLRQLALRINQILINFFHQCGITLVDFKLEFGMTSDQQLLLADEISPDTCRLWDDAESDPTRRVMDKDRFRRDLGEVDTAYARVMERVLAQDIYVP</sequence>
<comment type="catalytic activity">
    <reaction evidence="1">
        <text>5-amino-1-(5-phospho-D-ribosyl)imidazole-4-carboxylate + L-aspartate + ATP = (2S)-2-[5-amino-1-(5-phospho-beta-D-ribosyl)imidazole-4-carboxamido]succinate + ADP + phosphate + 2 H(+)</text>
        <dbReference type="Rhea" id="RHEA:22628"/>
        <dbReference type="ChEBI" id="CHEBI:15378"/>
        <dbReference type="ChEBI" id="CHEBI:29991"/>
        <dbReference type="ChEBI" id="CHEBI:30616"/>
        <dbReference type="ChEBI" id="CHEBI:43474"/>
        <dbReference type="ChEBI" id="CHEBI:58443"/>
        <dbReference type="ChEBI" id="CHEBI:77657"/>
        <dbReference type="ChEBI" id="CHEBI:456216"/>
        <dbReference type="EC" id="6.3.2.6"/>
    </reaction>
</comment>
<comment type="pathway">
    <text evidence="1">Purine metabolism; IMP biosynthesis via de novo pathway; 5-amino-1-(5-phospho-D-ribosyl)imidazole-4-carboxamide from 5-amino-1-(5-phospho-D-ribosyl)imidazole-4-carboxylate: step 1/2.</text>
</comment>
<comment type="similarity">
    <text evidence="1">Belongs to the SAICAR synthetase family.</text>
</comment>
<accession>B0CD47</accession>
<feature type="chain" id="PRO_1000076443" description="Phosphoribosylaminoimidazole-succinocarboxamide synthase">
    <location>
        <begin position="1"/>
        <end position="245"/>
    </location>
</feature>
<evidence type="ECO:0000255" key="1">
    <source>
        <dbReference type="HAMAP-Rule" id="MF_00137"/>
    </source>
</evidence>
<keyword id="KW-0067">ATP-binding</keyword>
<keyword id="KW-0436">Ligase</keyword>
<keyword id="KW-0547">Nucleotide-binding</keyword>
<keyword id="KW-0658">Purine biosynthesis</keyword>
<keyword id="KW-1185">Reference proteome</keyword>
<gene>
    <name evidence="1" type="primary">purC</name>
    <name type="ordered locus">AM1_0588</name>
</gene>